<gene>
    <name evidence="1" type="primary">def</name>
    <name type="ordered locus">aq_579</name>
</gene>
<keyword id="KW-0378">Hydrolase</keyword>
<keyword id="KW-0408">Iron</keyword>
<keyword id="KW-0479">Metal-binding</keyword>
<keyword id="KW-0648">Protein biosynthesis</keyword>
<keyword id="KW-1185">Reference proteome</keyword>
<protein>
    <recommendedName>
        <fullName evidence="1">Peptide deformylase</fullName>
        <shortName evidence="1">PDF</shortName>
        <ecNumber evidence="1">3.5.1.88</ecNumber>
    </recommendedName>
    <alternativeName>
        <fullName evidence="1">Polypeptide deformylase</fullName>
    </alternativeName>
</protein>
<feature type="chain" id="PRO_0000082732" description="Peptide deformylase">
    <location>
        <begin position="1"/>
        <end position="169"/>
    </location>
</feature>
<feature type="active site" evidence="1">
    <location>
        <position position="136"/>
    </location>
</feature>
<feature type="binding site" evidence="1">
    <location>
        <position position="93"/>
    </location>
    <ligand>
        <name>Fe cation</name>
        <dbReference type="ChEBI" id="CHEBI:24875"/>
    </ligand>
</feature>
<feature type="binding site" evidence="1">
    <location>
        <position position="135"/>
    </location>
    <ligand>
        <name>Fe cation</name>
        <dbReference type="ChEBI" id="CHEBI:24875"/>
    </ligand>
</feature>
<feature type="binding site" evidence="1">
    <location>
        <position position="139"/>
    </location>
    <ligand>
        <name>Fe cation</name>
        <dbReference type="ChEBI" id="CHEBI:24875"/>
    </ligand>
</feature>
<proteinExistence type="inferred from homology"/>
<reference key="1">
    <citation type="journal article" date="1998" name="Nature">
        <title>The complete genome of the hyperthermophilic bacterium Aquifex aeolicus.</title>
        <authorList>
            <person name="Deckert G."/>
            <person name="Warren P.V."/>
            <person name="Gaasterland T."/>
            <person name="Young W.G."/>
            <person name="Lenox A.L."/>
            <person name="Graham D.E."/>
            <person name="Overbeek R."/>
            <person name="Snead M.A."/>
            <person name="Keller M."/>
            <person name="Aujay M."/>
            <person name="Huber R."/>
            <person name="Feldman R.A."/>
            <person name="Short J.M."/>
            <person name="Olsen G.J."/>
            <person name="Swanson R.V."/>
        </authorList>
    </citation>
    <scope>NUCLEOTIDE SEQUENCE [LARGE SCALE GENOMIC DNA]</scope>
    <source>
        <strain>VF5</strain>
    </source>
</reference>
<dbReference type="EC" id="3.5.1.88" evidence="1"/>
<dbReference type="EMBL" id="AE000657">
    <property type="protein sequence ID" value="AAC06802.1"/>
    <property type="molecule type" value="Genomic_DNA"/>
</dbReference>
<dbReference type="PIR" id="C70352">
    <property type="entry name" value="C70352"/>
</dbReference>
<dbReference type="RefSeq" id="NP_213407.1">
    <property type="nucleotide sequence ID" value="NC_000918.1"/>
</dbReference>
<dbReference type="RefSeq" id="WP_010880345.1">
    <property type="nucleotide sequence ID" value="NC_000918.1"/>
</dbReference>
<dbReference type="SMR" id="O66847"/>
<dbReference type="FunCoup" id="O66847">
    <property type="interactions" value="433"/>
</dbReference>
<dbReference type="STRING" id="224324.aq_579"/>
<dbReference type="EnsemblBacteria" id="AAC06802">
    <property type="protein sequence ID" value="AAC06802"/>
    <property type="gene ID" value="aq_579"/>
</dbReference>
<dbReference type="KEGG" id="aae:aq_579"/>
<dbReference type="PATRIC" id="fig|224324.8.peg.474"/>
<dbReference type="eggNOG" id="COG0242">
    <property type="taxonomic scope" value="Bacteria"/>
</dbReference>
<dbReference type="HOGENOM" id="CLU_061901_2_0_0"/>
<dbReference type="InParanoid" id="O66847"/>
<dbReference type="OrthoDB" id="9784988at2"/>
<dbReference type="Proteomes" id="UP000000798">
    <property type="component" value="Chromosome"/>
</dbReference>
<dbReference type="GO" id="GO:0046872">
    <property type="term" value="F:metal ion binding"/>
    <property type="evidence" value="ECO:0007669"/>
    <property type="project" value="UniProtKB-KW"/>
</dbReference>
<dbReference type="GO" id="GO:0042586">
    <property type="term" value="F:peptide deformylase activity"/>
    <property type="evidence" value="ECO:0000318"/>
    <property type="project" value="GO_Central"/>
</dbReference>
<dbReference type="GO" id="GO:0043686">
    <property type="term" value="P:co-translational protein modification"/>
    <property type="evidence" value="ECO:0000318"/>
    <property type="project" value="GO_Central"/>
</dbReference>
<dbReference type="GO" id="GO:0006412">
    <property type="term" value="P:translation"/>
    <property type="evidence" value="ECO:0007669"/>
    <property type="project" value="UniProtKB-UniRule"/>
</dbReference>
<dbReference type="CDD" id="cd00487">
    <property type="entry name" value="Pep_deformylase"/>
    <property type="match status" value="1"/>
</dbReference>
<dbReference type="Gene3D" id="3.90.45.10">
    <property type="entry name" value="Peptide deformylase"/>
    <property type="match status" value="1"/>
</dbReference>
<dbReference type="HAMAP" id="MF_00163">
    <property type="entry name" value="Pep_deformylase"/>
    <property type="match status" value="1"/>
</dbReference>
<dbReference type="InterPro" id="IPR023635">
    <property type="entry name" value="Peptide_deformylase"/>
</dbReference>
<dbReference type="InterPro" id="IPR036821">
    <property type="entry name" value="Peptide_deformylase_sf"/>
</dbReference>
<dbReference type="NCBIfam" id="TIGR00079">
    <property type="entry name" value="pept_deformyl"/>
    <property type="match status" value="1"/>
</dbReference>
<dbReference type="NCBIfam" id="NF001159">
    <property type="entry name" value="PRK00150.1-3"/>
    <property type="match status" value="1"/>
</dbReference>
<dbReference type="PANTHER" id="PTHR10458">
    <property type="entry name" value="PEPTIDE DEFORMYLASE"/>
    <property type="match status" value="1"/>
</dbReference>
<dbReference type="PANTHER" id="PTHR10458:SF22">
    <property type="entry name" value="PEPTIDE DEFORMYLASE"/>
    <property type="match status" value="1"/>
</dbReference>
<dbReference type="Pfam" id="PF01327">
    <property type="entry name" value="Pep_deformylase"/>
    <property type="match status" value="1"/>
</dbReference>
<dbReference type="PIRSF" id="PIRSF004749">
    <property type="entry name" value="Pep_def"/>
    <property type="match status" value="1"/>
</dbReference>
<dbReference type="PRINTS" id="PR01576">
    <property type="entry name" value="PDEFORMYLASE"/>
</dbReference>
<dbReference type="SUPFAM" id="SSF56420">
    <property type="entry name" value="Peptide deformylase"/>
    <property type="match status" value="1"/>
</dbReference>
<accession>O66847</accession>
<evidence type="ECO:0000255" key="1">
    <source>
        <dbReference type="HAMAP-Rule" id="MF_00163"/>
    </source>
</evidence>
<organism>
    <name type="scientific">Aquifex aeolicus (strain VF5)</name>
    <dbReference type="NCBI Taxonomy" id="224324"/>
    <lineage>
        <taxon>Bacteria</taxon>
        <taxon>Pseudomonadati</taxon>
        <taxon>Aquificota</taxon>
        <taxon>Aquificia</taxon>
        <taxon>Aquificales</taxon>
        <taxon>Aquificaceae</taxon>
        <taxon>Aquifex</taxon>
    </lineage>
</organism>
<sequence>MVRDIVIYPNEILKKPTEKVDVIDKEVKNLIRDMFDTMYEAEGVGLAANQIGVPLSVMVIDTSPKEDAPPLKLVLINPEIKEGEGKIKYKEGCLSFPGLSVEVERFQKVKVNALNEHGEPVELTLEGFPAIVFQHELDHLKGITFVDRLKGWRRRMALEKYQKLLKSRK</sequence>
<name>DEF_AQUAE</name>
<comment type="function">
    <text evidence="1">Removes the formyl group from the N-terminal Met of newly synthesized proteins. Requires at least a dipeptide for an efficient rate of reaction. N-terminal L-methionine is a prerequisite for activity but the enzyme has broad specificity at other positions.</text>
</comment>
<comment type="catalytic activity">
    <reaction evidence="1">
        <text>N-terminal N-formyl-L-methionyl-[peptide] + H2O = N-terminal L-methionyl-[peptide] + formate</text>
        <dbReference type="Rhea" id="RHEA:24420"/>
        <dbReference type="Rhea" id="RHEA-COMP:10639"/>
        <dbReference type="Rhea" id="RHEA-COMP:10640"/>
        <dbReference type="ChEBI" id="CHEBI:15377"/>
        <dbReference type="ChEBI" id="CHEBI:15740"/>
        <dbReference type="ChEBI" id="CHEBI:49298"/>
        <dbReference type="ChEBI" id="CHEBI:64731"/>
        <dbReference type="EC" id="3.5.1.88"/>
    </reaction>
</comment>
<comment type="cofactor">
    <cofactor evidence="1">
        <name>Fe(2+)</name>
        <dbReference type="ChEBI" id="CHEBI:29033"/>
    </cofactor>
    <text evidence="1">Binds 1 Fe(2+) ion.</text>
</comment>
<comment type="similarity">
    <text evidence="1">Belongs to the polypeptide deformylase family.</text>
</comment>